<dbReference type="EC" id="2.7.11.1" evidence="11"/>
<dbReference type="EMBL" id="U38820">
    <property type="protein sequence ID" value="AAA92436.1"/>
    <property type="molecule type" value="mRNA"/>
</dbReference>
<dbReference type="EMBL" id="S80647">
    <property type="protein sequence ID" value="AAB35769.1"/>
    <property type="molecule type" value="mRNA"/>
</dbReference>
<dbReference type="EMBL" id="BX284606">
    <property type="protein sequence ID" value="CCD69410.1"/>
    <property type="molecule type" value="Genomic_DNA"/>
</dbReference>
<dbReference type="RefSeq" id="NP_509396.1">
    <property type="nucleotide sequence ID" value="NM_076995.7"/>
</dbReference>
<dbReference type="SMR" id="G5EFD2"/>
<dbReference type="ELM" id="G5EFD2"/>
<dbReference type="FunCoup" id="G5EFD2">
    <property type="interactions" value="1180"/>
</dbReference>
<dbReference type="STRING" id="6239.F13B9.5.2"/>
<dbReference type="PaxDb" id="6239-F13B9.5.2"/>
<dbReference type="PeptideAtlas" id="G5EFD2"/>
<dbReference type="EnsemblMetazoa" id="F13B9.5.1">
    <property type="protein sequence ID" value="F13B9.5.1"/>
    <property type="gene ID" value="WBGene00002239"/>
</dbReference>
<dbReference type="GeneID" id="181082"/>
<dbReference type="KEGG" id="cel:CELE_F13B9.5"/>
<dbReference type="AGR" id="WB:WBGene00002239"/>
<dbReference type="CTD" id="181082"/>
<dbReference type="WormBase" id="F13B9.5">
    <property type="protein sequence ID" value="CE25854"/>
    <property type="gene ID" value="WBGene00002239"/>
    <property type="gene designation" value="ksr-1"/>
</dbReference>
<dbReference type="eggNOG" id="KOG0193">
    <property type="taxonomic scope" value="Eukaryota"/>
</dbReference>
<dbReference type="GeneTree" id="ENSGT00940000173084"/>
<dbReference type="HOGENOM" id="CLU_364191_0_0_1"/>
<dbReference type="InParanoid" id="G5EFD2"/>
<dbReference type="OMA" id="HAIPHKW"/>
<dbReference type="OrthoDB" id="774951at2759"/>
<dbReference type="PhylomeDB" id="G5EFD2"/>
<dbReference type="Reactome" id="R-CEL-5673000">
    <property type="pathway name" value="RAF activation"/>
</dbReference>
<dbReference type="Reactome" id="R-CEL-5674135">
    <property type="pathway name" value="MAP2K and MAPK activation"/>
</dbReference>
<dbReference type="Reactome" id="R-CEL-5675221">
    <property type="pathway name" value="Negative regulation of MAPK pathway"/>
</dbReference>
<dbReference type="SignaLink" id="G5EFD2"/>
<dbReference type="PRO" id="PR:G5EFD2"/>
<dbReference type="Proteomes" id="UP000001940">
    <property type="component" value="Chromosome X"/>
</dbReference>
<dbReference type="Bgee" id="WBGene00002239">
    <property type="expression patterns" value="Expressed in embryo and 3 other cell types or tissues"/>
</dbReference>
<dbReference type="GO" id="GO:0005737">
    <property type="term" value="C:cytoplasm"/>
    <property type="evidence" value="ECO:0000318"/>
    <property type="project" value="GO_Central"/>
</dbReference>
<dbReference type="GO" id="GO:0005524">
    <property type="term" value="F:ATP binding"/>
    <property type="evidence" value="ECO:0007669"/>
    <property type="project" value="UniProtKB-KW"/>
</dbReference>
<dbReference type="GO" id="GO:0031434">
    <property type="term" value="F:mitogen-activated protein kinase kinase binding"/>
    <property type="evidence" value="ECO:0000353"/>
    <property type="project" value="UniProtKB"/>
</dbReference>
<dbReference type="GO" id="GO:0004672">
    <property type="term" value="F:protein kinase activity"/>
    <property type="evidence" value="ECO:0000318"/>
    <property type="project" value="GO_Central"/>
</dbReference>
<dbReference type="GO" id="GO:0106310">
    <property type="term" value="F:protein serine kinase activity"/>
    <property type="evidence" value="ECO:0007669"/>
    <property type="project" value="RHEA"/>
</dbReference>
<dbReference type="GO" id="GO:0004674">
    <property type="term" value="F:protein serine/threonine kinase activity"/>
    <property type="evidence" value="ECO:0007669"/>
    <property type="project" value="UniProtKB-KW"/>
</dbReference>
<dbReference type="GO" id="GO:0004713">
    <property type="term" value="F:protein tyrosine kinase activity"/>
    <property type="evidence" value="ECO:0007669"/>
    <property type="project" value="UniProtKB-KW"/>
</dbReference>
<dbReference type="GO" id="GO:0008270">
    <property type="term" value="F:zinc ion binding"/>
    <property type="evidence" value="ECO:0007669"/>
    <property type="project" value="UniProtKB-KW"/>
</dbReference>
<dbReference type="GO" id="GO:0001708">
    <property type="term" value="P:cell fate specification"/>
    <property type="evidence" value="ECO:0000316"/>
    <property type="project" value="WormBase"/>
</dbReference>
<dbReference type="GO" id="GO:0050830">
    <property type="term" value="P:defense response to Gram-positive bacterium"/>
    <property type="evidence" value="ECO:0000315"/>
    <property type="project" value="UniProtKB"/>
</dbReference>
<dbReference type="GO" id="GO:0051321">
    <property type="term" value="P:meiotic cell cycle"/>
    <property type="evidence" value="ECO:0007669"/>
    <property type="project" value="UniProtKB-KW"/>
</dbReference>
<dbReference type="GO" id="GO:0051451">
    <property type="term" value="P:myoblast migration"/>
    <property type="evidence" value="ECO:0000315"/>
    <property type="project" value="WormBase"/>
</dbReference>
<dbReference type="GO" id="GO:0002119">
    <property type="term" value="P:nematode larval development"/>
    <property type="evidence" value="ECO:0000315"/>
    <property type="project" value="WormBase"/>
</dbReference>
<dbReference type="GO" id="GO:0046579">
    <property type="term" value="P:positive regulation of Ras protein signal transduction"/>
    <property type="evidence" value="ECO:0000316"/>
    <property type="project" value="WormBase"/>
</dbReference>
<dbReference type="GO" id="GO:0040026">
    <property type="term" value="P:positive regulation of vulval development"/>
    <property type="evidence" value="ECO:0000316"/>
    <property type="project" value="UniProtKB"/>
</dbReference>
<dbReference type="GO" id="GO:0007265">
    <property type="term" value="P:Ras protein signal transduction"/>
    <property type="evidence" value="ECO:0000318"/>
    <property type="project" value="GO_Central"/>
</dbReference>
<dbReference type="CDD" id="cd00029">
    <property type="entry name" value="C1"/>
    <property type="match status" value="1"/>
</dbReference>
<dbReference type="FunFam" id="3.30.200.20:FF:000911">
    <property type="entry name" value="Protein CBR-KSR-1"/>
    <property type="match status" value="1"/>
</dbReference>
<dbReference type="Gene3D" id="3.30.60.20">
    <property type="match status" value="1"/>
</dbReference>
<dbReference type="Gene3D" id="3.30.200.20">
    <property type="entry name" value="Phosphorylase Kinase, domain 1"/>
    <property type="match status" value="1"/>
</dbReference>
<dbReference type="Gene3D" id="1.10.510.10">
    <property type="entry name" value="Transferase(Phosphotransferase) domain 1"/>
    <property type="match status" value="1"/>
</dbReference>
<dbReference type="InterPro" id="IPR046349">
    <property type="entry name" value="C1-like_sf"/>
</dbReference>
<dbReference type="InterPro" id="IPR011009">
    <property type="entry name" value="Kinase-like_dom_sf"/>
</dbReference>
<dbReference type="InterPro" id="IPR002219">
    <property type="entry name" value="PE/DAG-bd"/>
</dbReference>
<dbReference type="InterPro" id="IPR000719">
    <property type="entry name" value="Prot_kinase_dom"/>
</dbReference>
<dbReference type="InterPro" id="IPR017441">
    <property type="entry name" value="Protein_kinase_ATP_BS"/>
</dbReference>
<dbReference type="InterPro" id="IPR001245">
    <property type="entry name" value="Ser-Thr/Tyr_kinase_cat_dom"/>
</dbReference>
<dbReference type="InterPro" id="IPR050167">
    <property type="entry name" value="Ser_Thr_protein_kinase"/>
</dbReference>
<dbReference type="InterPro" id="IPR008266">
    <property type="entry name" value="Tyr_kinase_AS"/>
</dbReference>
<dbReference type="PANTHER" id="PTHR23257:SF963">
    <property type="entry name" value="AT08303P"/>
    <property type="match status" value="1"/>
</dbReference>
<dbReference type="PANTHER" id="PTHR23257">
    <property type="entry name" value="SERINE-THREONINE PROTEIN KINASE"/>
    <property type="match status" value="1"/>
</dbReference>
<dbReference type="Pfam" id="PF07714">
    <property type="entry name" value="PK_Tyr_Ser-Thr"/>
    <property type="match status" value="1"/>
</dbReference>
<dbReference type="SMART" id="SM00109">
    <property type="entry name" value="C1"/>
    <property type="match status" value="1"/>
</dbReference>
<dbReference type="SUPFAM" id="SSF57889">
    <property type="entry name" value="Cysteine-rich domain"/>
    <property type="match status" value="1"/>
</dbReference>
<dbReference type="SUPFAM" id="SSF56112">
    <property type="entry name" value="Protein kinase-like (PK-like)"/>
    <property type="match status" value="1"/>
</dbReference>
<dbReference type="PROSITE" id="PS00107">
    <property type="entry name" value="PROTEIN_KINASE_ATP"/>
    <property type="match status" value="1"/>
</dbReference>
<dbReference type="PROSITE" id="PS50011">
    <property type="entry name" value="PROTEIN_KINASE_DOM"/>
    <property type="match status" value="1"/>
</dbReference>
<dbReference type="PROSITE" id="PS00109">
    <property type="entry name" value="PROTEIN_KINASE_TYR"/>
    <property type="match status" value="1"/>
</dbReference>
<dbReference type="PROSITE" id="PS50081">
    <property type="entry name" value="ZF_DAG_PE_2"/>
    <property type="match status" value="1"/>
</dbReference>
<proteinExistence type="evidence at protein level"/>
<gene>
    <name evidence="15" type="primary">ksr-1</name>
    <name evidence="15" type="ORF">F13B9.5</name>
</gene>
<keyword id="KW-0067">ATP-binding</keyword>
<keyword id="KW-0418">Kinase</keyword>
<keyword id="KW-0460">Magnesium</keyword>
<keyword id="KW-0469">Meiosis</keyword>
<keyword id="KW-0479">Metal-binding</keyword>
<keyword id="KW-0547">Nucleotide-binding</keyword>
<keyword id="KW-1185">Reference proteome</keyword>
<keyword id="KW-0723">Serine/threonine-protein kinase</keyword>
<keyword id="KW-0808">Transferase</keyword>
<keyword id="KW-0829">Tyrosine-protein kinase</keyword>
<keyword id="KW-0862">Zinc</keyword>
<keyword id="KW-0863">Zinc-finger</keyword>
<organism evidence="14">
    <name type="scientific">Caenorhabditis elegans</name>
    <dbReference type="NCBI Taxonomy" id="6239"/>
    <lineage>
        <taxon>Eukaryota</taxon>
        <taxon>Metazoa</taxon>
        <taxon>Ecdysozoa</taxon>
        <taxon>Nematoda</taxon>
        <taxon>Chromadorea</taxon>
        <taxon>Rhabditida</taxon>
        <taxon>Rhabditina</taxon>
        <taxon>Rhabditomorpha</taxon>
        <taxon>Rhabditoidea</taxon>
        <taxon>Rhabditidae</taxon>
        <taxon>Peloderinae</taxon>
        <taxon>Caenorhabditis</taxon>
    </lineage>
</organism>
<feature type="chain" id="PRO_0000434554" description="Kinase suppressor of Ras A" evidence="11">
    <location>
        <begin position="1"/>
        <end position="771"/>
    </location>
</feature>
<feature type="domain" description="Protein kinase" evidence="1">
    <location>
        <begin position="477"/>
        <end position="748"/>
    </location>
</feature>
<feature type="zinc finger region" description="Phorbol-ester/DAG-type" evidence="2">
    <location>
        <begin position="215"/>
        <end position="269"/>
    </location>
</feature>
<feature type="region of interest" description="Disordered" evidence="3">
    <location>
        <begin position="152"/>
        <end position="172"/>
    </location>
</feature>
<feature type="region of interest" description="Disordered" evidence="3">
    <location>
        <begin position="290"/>
        <end position="339"/>
    </location>
</feature>
<feature type="region of interest" description="Disordered" evidence="3">
    <location>
        <begin position="414"/>
        <end position="433"/>
    </location>
</feature>
<feature type="compositionally biased region" description="Polar residues" evidence="3">
    <location>
        <begin position="152"/>
        <end position="169"/>
    </location>
</feature>
<feature type="compositionally biased region" description="Low complexity" evidence="3">
    <location>
        <begin position="318"/>
        <end position="331"/>
    </location>
</feature>
<feature type="active site" description="Proton acceptor" evidence="1">
    <location>
        <position position="600"/>
    </location>
</feature>
<feature type="binding site" evidence="1">
    <location>
        <begin position="483"/>
        <end position="491"/>
    </location>
    <ligand>
        <name>ATP</name>
        <dbReference type="ChEBI" id="CHEBI:30616"/>
    </ligand>
</feature>
<feature type="binding site" evidence="1">
    <location>
        <position position="503"/>
    </location>
    <ligand>
        <name>ATP</name>
        <dbReference type="ChEBI" id="CHEBI:30616"/>
    </ligand>
</feature>
<feature type="mutagenesis site" description="In n2509; restores vulva development in a let-60 n1046gf mutant background." evidence="9">
    <original>R</original>
    <variation>H</variation>
    <location>
        <position position="277"/>
    </location>
</feature>
<feature type="mutagenesis site" description="In ku113; restores vulva development in a let-60 n1046gf mutant background." evidence="8">
    <original>G</original>
    <variation>E</variation>
    <location>
        <position position="484"/>
    </location>
</feature>
<feature type="mutagenesis site" description="In ku83; abnormal sex myoblast (SM) migration. Restores vulva development in a let-60 n1046gf mutant background." evidence="8">
    <original>G</original>
    <variation>E</variation>
    <location>
        <position position="494"/>
    </location>
</feature>
<feature type="mutagenesis site" description="Probable loss of kinase activity. Does not rescue vulva development in a let-60 n1046gf mutant background." evidence="4">
    <original>K</original>
    <variation>M</variation>
    <location>
        <position position="503"/>
    </location>
</feature>
<feature type="mutagenesis site" description="In ku68; egg-laying defect in 14 percent of mutants. Arrest at the larval stage in 12 percent of mutants and abnormal sex myoblast (SM) migration. Restores vulva development in a let-60 n1046gf mutant background." evidence="4 8">
    <original>R</original>
    <variation>H</variation>
    <location>
        <position position="531"/>
    </location>
</feature>
<feature type="mutagenesis site" description="In n1860; arrest at the larval stage in 12 percent of mutants. Restores vulva development in a let-60 n1046gf mutant background." evidence="9">
    <original>G</original>
    <variation>E</variation>
    <location>
        <position position="549"/>
    </location>
</feature>
<feature type="mutagenesis site" description="Probable loss of kinase activity. Does not rescue vulva development in a let-60 n1046gf mutant background." evidence="4">
    <original>D</original>
    <variation>A</variation>
    <location>
        <position position="618"/>
    </location>
</feature>
<feature type="mutagenesis site" description="In ku146 and n2522; restores vulva development in a let-60 n1046gf mutant background." evidence="8 9">
    <original>P</original>
    <variation>L</variation>
    <variation>S</variation>
    <location>
        <position position="630"/>
    </location>
</feature>
<feature type="mutagenesis site" description="In n2519; restores vulva development in a let-60 n1046gf mutant background." evidence="8">
    <original>P</original>
    <variation>L</variation>
    <location>
        <position position="696"/>
    </location>
</feature>
<feature type="mutagenesis site" description="In ku148; restores vulva development in a let-60 n1046gf mutant background." evidence="8">
    <original>C</original>
    <variation>Y</variation>
    <location>
        <position position="727"/>
    </location>
</feature>
<name>KSRA_CAEEL</name>
<reference evidence="12" key="1">
    <citation type="journal article" date="1995" name="Cell">
        <title>The C. elegans ksr-1 gene encodes a novel Raf-related kinase involved in Ras-mediated signal transduction.</title>
        <authorList>
            <person name="Sundaram M."/>
            <person name="Han M."/>
        </authorList>
    </citation>
    <scope>NUCLEOTIDE SEQUENCE [MRNA]</scope>
    <scope>FUNCTION</scope>
    <scope>MUTAGENESIS OF GLY-484; GLY-494; ARG-531; PRO-630; PRO-696 AND CYS-727</scope>
    <source>
        <strain evidence="12">Bristol N2</strain>
    </source>
</reference>
<reference evidence="13" key="2">
    <citation type="journal article" date="1995" name="Cell">
        <title>The ksr-1 gene encodes a novel protein kinase involved in Ras-mediated signaling in C. elegans.</title>
        <authorList>
            <person name="Kornfeld K."/>
            <person name="Hom D.B."/>
            <person name="Horvitz H.R."/>
        </authorList>
    </citation>
    <scope>NUCLEOTIDE SEQUENCE [MRNA]</scope>
    <scope>FUNCTION</scope>
    <scope>MUTAGENESIS OF ARG-277; GLY-549; PRO-630 AND PRO-696</scope>
</reference>
<reference evidence="14" key="3">
    <citation type="journal article" date="1998" name="Science">
        <title>Genome sequence of the nematode C. elegans: a platform for investigating biology.</title>
        <authorList>
            <consortium name="The C. elegans sequencing consortium"/>
        </authorList>
    </citation>
    <scope>NUCLEOTIDE SEQUENCE [LARGE SCALE GENOMIC DNA]</scope>
    <source>
        <strain evidence="14">Bristol N2</strain>
    </source>
</reference>
<reference evidence="11" key="4">
    <citation type="journal article" date="1999" name="Mol. Cell. Biol.">
        <title>Kinase suppressor of Ras forms a multiprotein signaling complex and modulates MEK localization.</title>
        <authorList>
            <person name="Stewart S."/>
            <person name="Sundaram M."/>
            <person name="Zhang Y."/>
            <person name="Lee J."/>
            <person name="Han M."/>
            <person name="Guan K.L."/>
        </authorList>
    </citation>
    <scope>FUNCTION</scope>
    <scope>INTERACTION WITH MEK-2</scope>
    <scope>MUTAGENESIS OF LYS-503; ARG-531 AND ASP-618</scope>
</reference>
<reference evidence="11" key="5">
    <citation type="journal article" date="2002" name="Curr. Biol.">
        <title>C. elegans ksr-1 and ksr-2 have both unique and redundant functions and are required for MPK-1 ERK phosphorylation.</title>
        <authorList>
            <person name="Ohmachi M."/>
            <person name="Rocheleau C.E."/>
            <person name="Church D."/>
            <person name="Lambie E."/>
            <person name="Schedl T."/>
            <person name="Sundaram M.V."/>
        </authorList>
    </citation>
    <scope>FUNCTION</scope>
</reference>
<reference evidence="11" key="6">
    <citation type="journal article" date="2004" name="Curr. Biol.">
        <title>The ERK MAP kinase cascade mediates tail swelling and a protective response to rectal infection in C. elegans.</title>
        <authorList>
            <person name="Nicholas H.R."/>
            <person name="Hodgkin J."/>
        </authorList>
    </citation>
    <scope>FUNCTION</scope>
</reference>
<reference evidence="11" key="7">
    <citation type="journal article" date="2013" name="Development">
        <title>The NM23-H1/H2 homolog NDK-1 is required for full activation of Ras signaling in C. elegans.</title>
        <authorList>
            <person name="Masoudi N."/>
            <person name="Fancsalszky L."/>
            <person name="Pourkarimi E."/>
            <person name="Vellai T."/>
            <person name="Alexa A."/>
            <person name="Remenyi A."/>
            <person name="Gartner A."/>
            <person name="Mehta A."/>
            <person name="Takacs-Vellai K."/>
        </authorList>
    </citation>
    <scope>FUNCTION</scope>
</reference>
<accession>G5EFD2</accession>
<evidence type="ECO:0000255" key="1">
    <source>
        <dbReference type="PROSITE-ProRule" id="PRU00159"/>
    </source>
</evidence>
<evidence type="ECO:0000255" key="2">
    <source>
        <dbReference type="PROSITE-ProRule" id="PRU00226"/>
    </source>
</evidence>
<evidence type="ECO:0000256" key="3">
    <source>
        <dbReference type="SAM" id="MobiDB-lite"/>
    </source>
</evidence>
<evidence type="ECO:0000269" key="4">
    <source>
    </source>
</evidence>
<evidence type="ECO:0000269" key="5">
    <source>
    </source>
</evidence>
<evidence type="ECO:0000269" key="6">
    <source>
    </source>
</evidence>
<evidence type="ECO:0000269" key="7">
    <source>
    </source>
</evidence>
<evidence type="ECO:0000269" key="8">
    <source>
    </source>
</evidence>
<evidence type="ECO:0000269" key="9">
    <source>
    </source>
</evidence>
<evidence type="ECO:0000303" key="10">
    <source>
    </source>
</evidence>
<evidence type="ECO:0000305" key="11"/>
<evidence type="ECO:0000312" key="12">
    <source>
        <dbReference type="EMBL" id="AAA92436.1"/>
    </source>
</evidence>
<evidence type="ECO:0000312" key="13">
    <source>
        <dbReference type="EMBL" id="AAB35769.1"/>
    </source>
</evidence>
<evidence type="ECO:0000312" key="14">
    <source>
        <dbReference type="Proteomes" id="UP000001940"/>
    </source>
</evidence>
<evidence type="ECO:0000312" key="15">
    <source>
        <dbReference type="WormBase" id="F13B9.5"/>
    </source>
</evidence>
<sequence length="771" mass="86434">MMQTQVASRAGYSNLPQFGAGIAQDIKTQAINNLKECLKLTTINRFLTSSYEEDAKSVERKIFSAVYQMTKIGLIDREKREINAIWFTFVGLSAQNIRHLEICSITDFNALFSITNQELRSLADRGRLDVETKRKLLQSTVILQNHWNAYHSRTSSGSTDEPSGQSTPAIVTPSPKFNVPSLSVTSAKMIQSSSMGFATTPKSPKTSSRLVHAIPHKWHRSTKFRFSGDAVCHFCQRPLGFGFLNAWEKCRSCKWKVHTQCKGRVGDSCGLTPDHLRFLFDKLIQENNGGMWKDPQSVPGSRSMNEPAFQFPDTAIDSSSSTNSSAPSTPALPAGISGNVSSLTAPYRSERKFLFPDTENYSVHNRLPILVISEGDHPTTTEIQQETENHNKSAAASMSGNIESEGTIVANHEDSTGSQEVDSEAAPSQEAVDKFNKRADGGFTWERHAWNMSTIRGPNAQASWNEVTIQFETIEFDKQAPIIGRGRFGKVLRGFHYGDVAVKVYTMEHISDASKKAEEFKLEVSAYKNTRHDNIALFLGYFMSDGQYGMVMSLSKGSQSLYTLLHVVREKLDLATTRKIAQQICQAVSYLHTKKILHKDLRSKNILLESKNKVVITDFGILSMKRLAHPKQKSGYLTSKFWTNYIAPELAMAMRTEYDEYECDDFPFSENSDVYAFGCVWFEMLTGALPYAGELPHQILFAKTQGIRPVLPNVKCTQELKELLVSCWNTAPQDRPTLTDINLKLTALPKKPRVNRSPSFPVMMKSYESTF</sequence>
<comment type="function">
    <text evidence="4 5 6 7 8 9">Serine/threonine-protein kinase which positively regulates Ras-mediated signaling probably acting at the level of let-60/ras or/and lin-45/raf. Involved in sex myoblast migration (PubMed:11882296, PubMed:8521513). Plays a role in responses to M.nematophilum-mediated bacterial infection by promoting tail swelling and preventing constipation (PubMed:15268855). Functions redundantly with ksr-2 in the Ras-mediated regulation of larval survival, the development of excretory canal and in mpk-1 phosphorylation in somatic cells (PubMed:11882296, PubMed:8521513). In addition, involved in determining vulval precursor cell fate during vulval induction independently of its kinase activity (PubMed:10409742, PubMed:11882296, PubMed:8521513, PubMed:8521514). Plays a role in egg-laying (PubMed:23900546).</text>
</comment>
<comment type="catalytic activity">
    <reaction evidence="11">
        <text>L-seryl-[protein] + ATP = O-phospho-L-seryl-[protein] + ADP + H(+)</text>
        <dbReference type="Rhea" id="RHEA:17989"/>
        <dbReference type="Rhea" id="RHEA-COMP:9863"/>
        <dbReference type="Rhea" id="RHEA-COMP:11604"/>
        <dbReference type="ChEBI" id="CHEBI:15378"/>
        <dbReference type="ChEBI" id="CHEBI:29999"/>
        <dbReference type="ChEBI" id="CHEBI:30616"/>
        <dbReference type="ChEBI" id="CHEBI:83421"/>
        <dbReference type="ChEBI" id="CHEBI:456216"/>
        <dbReference type="EC" id="2.7.11.1"/>
    </reaction>
</comment>
<comment type="catalytic activity">
    <reaction evidence="11">
        <text>L-threonyl-[protein] + ATP = O-phospho-L-threonyl-[protein] + ADP + H(+)</text>
        <dbReference type="Rhea" id="RHEA:46608"/>
        <dbReference type="Rhea" id="RHEA-COMP:11060"/>
        <dbReference type="Rhea" id="RHEA-COMP:11605"/>
        <dbReference type="ChEBI" id="CHEBI:15378"/>
        <dbReference type="ChEBI" id="CHEBI:30013"/>
        <dbReference type="ChEBI" id="CHEBI:30616"/>
        <dbReference type="ChEBI" id="CHEBI:61977"/>
        <dbReference type="ChEBI" id="CHEBI:456216"/>
        <dbReference type="EC" id="2.7.11.1"/>
    </reaction>
</comment>
<comment type="cofactor">
    <cofactor evidence="11">
        <name>Mg(2+)</name>
        <dbReference type="ChEBI" id="CHEBI:18420"/>
    </cofactor>
</comment>
<comment type="subunit">
    <text evidence="4">Interacts with mek-2.</text>
</comment>
<comment type="similarity">
    <text evidence="11">Belongs to the protein kinase superfamily. TKL Ser/Thr protein kinase family.</text>
</comment>
<comment type="caution">
    <text evidence="10">The kinase may be catalytically inactive.</text>
</comment>
<protein>
    <recommendedName>
        <fullName evidence="11">Kinase suppressor of Ras A</fullName>
        <ecNumber evidence="11">2.7.11.1</ecNumber>
    </recommendedName>
</protein>